<name>KCY_ACHLI</name>
<protein>
    <recommendedName>
        <fullName evidence="1">Cytidylate kinase</fullName>
        <shortName evidence="1">CK</shortName>
        <ecNumber evidence="1">2.7.4.25</ecNumber>
    </recommendedName>
    <alternativeName>
        <fullName evidence="1">Cytidine monophosphate kinase</fullName>
        <shortName evidence="1">CMP kinase</shortName>
    </alternativeName>
</protein>
<feature type="chain" id="PRO_1000078329" description="Cytidylate kinase">
    <location>
        <begin position="1"/>
        <end position="222"/>
    </location>
</feature>
<feature type="binding site" evidence="1">
    <location>
        <begin position="10"/>
        <end position="18"/>
    </location>
    <ligand>
        <name>ATP</name>
        <dbReference type="ChEBI" id="CHEBI:30616"/>
    </ligand>
</feature>
<reference key="1">
    <citation type="journal article" date="2011" name="J. Bacteriol.">
        <title>Complete genome and proteome of Acholeplasma laidlawii.</title>
        <authorList>
            <person name="Lazarev V.N."/>
            <person name="Levitskii S.A."/>
            <person name="Basovskii Y.I."/>
            <person name="Chukin M.M."/>
            <person name="Akopian T.A."/>
            <person name="Vereshchagin V.V."/>
            <person name="Kostrjukova E.S."/>
            <person name="Kovaleva G.Y."/>
            <person name="Kazanov M.D."/>
            <person name="Malko D.B."/>
            <person name="Vitreschak A.G."/>
            <person name="Sernova N.V."/>
            <person name="Gelfand M.S."/>
            <person name="Demina I.A."/>
            <person name="Serebryakova M.V."/>
            <person name="Galyamina M.A."/>
            <person name="Vtyurin N.N."/>
            <person name="Rogov S.I."/>
            <person name="Alexeev D.G."/>
            <person name="Ladygina V.G."/>
            <person name="Govorun V.M."/>
        </authorList>
    </citation>
    <scope>NUCLEOTIDE SEQUENCE [LARGE SCALE GENOMIC DNA]</scope>
    <source>
        <strain>PG-8A</strain>
    </source>
</reference>
<keyword id="KW-0067">ATP-binding</keyword>
<keyword id="KW-0963">Cytoplasm</keyword>
<keyword id="KW-0418">Kinase</keyword>
<keyword id="KW-0547">Nucleotide-binding</keyword>
<keyword id="KW-1185">Reference proteome</keyword>
<keyword id="KW-0808">Transferase</keyword>
<sequence length="222" mass="25121">MAGFKVAIDGPAGSGKSSISKNVAHKLGMTHIDTGAMYRAVTLLAIENQIDMNDESQYRFLEDVQITYRDDHIYIGDRIVEKEIRSKAVTDHVSLVSSFPYVRKKLVEIQQKLGETNNIIMDGRDIGTVVLPDADLKIFLIADVRERAKRRQQDKQNQGYEVDIEKLIEEITRRDQLDSQRKISPLKKAEDAIVVDSTHMSLQQTVKKIIELIQSAKGVINE</sequence>
<proteinExistence type="inferred from homology"/>
<gene>
    <name evidence="1" type="primary">cmk</name>
    <name type="ordered locus">ACL_0876</name>
</gene>
<accession>A9NGK9</accession>
<evidence type="ECO:0000255" key="1">
    <source>
        <dbReference type="HAMAP-Rule" id="MF_00238"/>
    </source>
</evidence>
<comment type="catalytic activity">
    <reaction evidence="1">
        <text>CMP + ATP = CDP + ADP</text>
        <dbReference type="Rhea" id="RHEA:11600"/>
        <dbReference type="ChEBI" id="CHEBI:30616"/>
        <dbReference type="ChEBI" id="CHEBI:58069"/>
        <dbReference type="ChEBI" id="CHEBI:60377"/>
        <dbReference type="ChEBI" id="CHEBI:456216"/>
        <dbReference type="EC" id="2.7.4.25"/>
    </reaction>
</comment>
<comment type="catalytic activity">
    <reaction evidence="1">
        <text>dCMP + ATP = dCDP + ADP</text>
        <dbReference type="Rhea" id="RHEA:25094"/>
        <dbReference type="ChEBI" id="CHEBI:30616"/>
        <dbReference type="ChEBI" id="CHEBI:57566"/>
        <dbReference type="ChEBI" id="CHEBI:58593"/>
        <dbReference type="ChEBI" id="CHEBI:456216"/>
        <dbReference type="EC" id="2.7.4.25"/>
    </reaction>
</comment>
<comment type="subcellular location">
    <subcellularLocation>
        <location evidence="1">Cytoplasm</location>
    </subcellularLocation>
</comment>
<comment type="similarity">
    <text evidence="1">Belongs to the cytidylate kinase family. Type 1 subfamily.</text>
</comment>
<organism>
    <name type="scientific">Acholeplasma laidlawii (strain PG-8A)</name>
    <dbReference type="NCBI Taxonomy" id="441768"/>
    <lineage>
        <taxon>Bacteria</taxon>
        <taxon>Bacillati</taxon>
        <taxon>Mycoplasmatota</taxon>
        <taxon>Mollicutes</taxon>
        <taxon>Acholeplasmatales</taxon>
        <taxon>Acholeplasmataceae</taxon>
        <taxon>Acholeplasma</taxon>
    </lineage>
</organism>
<dbReference type="EC" id="2.7.4.25" evidence="1"/>
<dbReference type="EMBL" id="CP000896">
    <property type="protein sequence ID" value="ABX81489.1"/>
    <property type="molecule type" value="Genomic_DNA"/>
</dbReference>
<dbReference type="RefSeq" id="WP_012242820.1">
    <property type="nucleotide sequence ID" value="NC_010163.1"/>
</dbReference>
<dbReference type="SMR" id="A9NGK9"/>
<dbReference type="STRING" id="441768.ACL_0876"/>
<dbReference type="GeneID" id="41339029"/>
<dbReference type="KEGG" id="acl:ACL_0876"/>
<dbReference type="eggNOG" id="COG0283">
    <property type="taxonomic scope" value="Bacteria"/>
</dbReference>
<dbReference type="HOGENOM" id="CLU_079959_0_2_14"/>
<dbReference type="OrthoDB" id="9807434at2"/>
<dbReference type="Proteomes" id="UP000008558">
    <property type="component" value="Chromosome"/>
</dbReference>
<dbReference type="GO" id="GO:0005829">
    <property type="term" value="C:cytosol"/>
    <property type="evidence" value="ECO:0007669"/>
    <property type="project" value="TreeGrafter"/>
</dbReference>
<dbReference type="GO" id="GO:0005524">
    <property type="term" value="F:ATP binding"/>
    <property type="evidence" value="ECO:0007669"/>
    <property type="project" value="UniProtKB-UniRule"/>
</dbReference>
<dbReference type="GO" id="GO:0036430">
    <property type="term" value="F:CMP kinase activity"/>
    <property type="evidence" value="ECO:0007669"/>
    <property type="project" value="RHEA"/>
</dbReference>
<dbReference type="GO" id="GO:0036431">
    <property type="term" value="F:dCMP kinase activity"/>
    <property type="evidence" value="ECO:0007669"/>
    <property type="project" value="RHEA"/>
</dbReference>
<dbReference type="GO" id="GO:0015949">
    <property type="term" value="P:nucleobase-containing small molecule interconversion"/>
    <property type="evidence" value="ECO:0007669"/>
    <property type="project" value="TreeGrafter"/>
</dbReference>
<dbReference type="GO" id="GO:0006220">
    <property type="term" value="P:pyrimidine nucleotide metabolic process"/>
    <property type="evidence" value="ECO:0007669"/>
    <property type="project" value="UniProtKB-UniRule"/>
</dbReference>
<dbReference type="CDD" id="cd02020">
    <property type="entry name" value="CMPK"/>
    <property type="match status" value="1"/>
</dbReference>
<dbReference type="Gene3D" id="3.40.50.300">
    <property type="entry name" value="P-loop containing nucleotide triphosphate hydrolases"/>
    <property type="match status" value="1"/>
</dbReference>
<dbReference type="HAMAP" id="MF_00238">
    <property type="entry name" value="Cytidyl_kinase_type1"/>
    <property type="match status" value="1"/>
</dbReference>
<dbReference type="InterPro" id="IPR003136">
    <property type="entry name" value="Cytidylate_kin"/>
</dbReference>
<dbReference type="InterPro" id="IPR011994">
    <property type="entry name" value="Cytidylate_kinase_dom"/>
</dbReference>
<dbReference type="InterPro" id="IPR027417">
    <property type="entry name" value="P-loop_NTPase"/>
</dbReference>
<dbReference type="NCBIfam" id="TIGR00017">
    <property type="entry name" value="cmk"/>
    <property type="match status" value="1"/>
</dbReference>
<dbReference type="PANTHER" id="PTHR21299:SF2">
    <property type="entry name" value="CYTIDYLATE KINASE"/>
    <property type="match status" value="1"/>
</dbReference>
<dbReference type="PANTHER" id="PTHR21299">
    <property type="entry name" value="CYTIDYLATE KINASE/PANTOATE-BETA-ALANINE LIGASE"/>
    <property type="match status" value="1"/>
</dbReference>
<dbReference type="Pfam" id="PF02224">
    <property type="entry name" value="Cytidylate_kin"/>
    <property type="match status" value="1"/>
</dbReference>
<dbReference type="SUPFAM" id="SSF52540">
    <property type="entry name" value="P-loop containing nucleoside triphosphate hydrolases"/>
    <property type="match status" value="1"/>
</dbReference>